<gene>
    <name evidence="1" type="primary">gyrB</name>
    <name type="ordered locus">BUsg_010</name>
</gene>
<accession>P29435</accession>
<sequence>MIDTYDSSKIKILRGLDAVRKRPGMYIGDTDDGSGLHHMVFEIVDNSIDEALAGFCKEIKVVIHSDNSVSIKDDGRGIPTDIHPEEKISAAEVIMTVLHSGGKFDNASYKISGGLHGVGISVVNALSEKLELIIYKNKKKYRQQYKNGNPESPLCIIGATEITGTYIRFWPSYKIFTNKTQFQYEILSKRLRELSFLNSNILIHLKDNRTNLEEKYHYKGGIKAFIKFLNKNKFPINLNIFYFRCIKNQIELEIAIQWNNSHQENILCFTNNIPQKDGGTHLSGFRAGITRTLNLHIEREGYNKKNKTIITGEDTREGLTAIISIKIPDPKFSSQTKDKLVSSEVKSVIESLINENLIEYLLENPIDAKFIIQKIINSAKIREAARRAREINKKKGTLDLGTLPGKLSDCQENDPKLSEIYLVEGDSAGGSAKQGRNRKNQAILPLKGKILNVQKTKFDKIILSQELTSLITALGCSITKSEYSLDKLRYNHIIIMTDADVDGAHIRTLLLTFFYRQLPELIKKGYVYIAQPPLYKVKKGKQEKYIKNDEEMNKYQIKIALKEIVIKNKKNENCNKIIKEFQKIVSDFNHIQIKMKKNKNYFPELILNELIYHPRLYNLKNENVVQNWIEKLVEKLNKKDKNNTIYTSKIKRNENDSIFEPSIKLSRYANHTQYDLKNDFLESKEYFLITNLGEKFKKFQENENFIEKGEKIYKINDIKNTLEWLIKETKRGFFVQRYKGLGEMNPDQLWNTTMNPETRNMLQVTIKDAISANNLFNTLMGDLVEPRRKFIQKNALKAENIDI</sequence>
<feature type="chain" id="PRO_0000145299" description="DNA gyrase subunit B">
    <location>
        <begin position="1"/>
        <end position="803"/>
    </location>
</feature>
<feature type="domain" description="Toprim" evidence="1">
    <location>
        <begin position="418"/>
        <end position="533"/>
    </location>
</feature>
<feature type="binding site" evidence="1">
    <location>
        <position position="424"/>
    </location>
    <ligand>
        <name>Mg(2+)</name>
        <dbReference type="ChEBI" id="CHEBI:18420"/>
        <label>1</label>
        <note>catalytic</note>
    </ligand>
</feature>
<feature type="binding site" evidence="1">
    <location>
        <position position="498"/>
    </location>
    <ligand>
        <name>Mg(2+)</name>
        <dbReference type="ChEBI" id="CHEBI:18420"/>
        <label>1</label>
        <note>catalytic</note>
    </ligand>
</feature>
<feature type="binding site" evidence="1">
    <location>
        <position position="498"/>
    </location>
    <ligand>
        <name>Mg(2+)</name>
        <dbReference type="ChEBI" id="CHEBI:18420"/>
        <label>2</label>
    </ligand>
</feature>
<feature type="binding site" evidence="1">
    <location>
        <position position="500"/>
    </location>
    <ligand>
        <name>Mg(2+)</name>
        <dbReference type="ChEBI" id="CHEBI:18420"/>
        <label>2</label>
    </ligand>
</feature>
<feature type="site" description="Interaction with DNA" evidence="1">
    <location>
        <position position="449"/>
    </location>
</feature>
<feature type="site" description="Interaction with DNA" evidence="1">
    <location>
        <position position="452"/>
    </location>
</feature>
<feature type="sequence conflict" description="In Ref. 1; AAC38108." evidence="2" ref="1">
    <original>K</original>
    <variation>E</variation>
    <location>
        <position position="146"/>
    </location>
</feature>
<proteinExistence type="inferred from homology"/>
<reference key="1">
    <citation type="journal article" date="1998" name="Curr. Microbiol.">
        <title>Sequence analysis of a 34.7-kb DNA segment from the genome of Buchnera aphidicola (endosymbiont of aphids) containing groEL, dnaA, the atp operon, gidA, and rho.</title>
        <authorList>
            <person name="Clark M.A."/>
            <person name="Baumann L."/>
            <person name="Baumann P."/>
        </authorList>
    </citation>
    <scope>NUCLEOTIDE SEQUENCE [GENOMIC DNA]</scope>
</reference>
<reference key="2">
    <citation type="journal article" date="2002" name="Science">
        <title>50 million years of genomic stasis in endosymbiotic bacteria.</title>
        <authorList>
            <person name="Tamas I."/>
            <person name="Klasson L."/>
            <person name="Canbaeck B."/>
            <person name="Naeslund A.K."/>
            <person name="Eriksson A.-S."/>
            <person name="Wernegreen J.J."/>
            <person name="Sandstroem J.P."/>
            <person name="Moran N.A."/>
            <person name="Andersson S.G.E."/>
        </authorList>
    </citation>
    <scope>NUCLEOTIDE SEQUENCE [LARGE SCALE GENOMIC DNA]</scope>
    <source>
        <strain>Sg</strain>
    </source>
</reference>
<reference key="3">
    <citation type="journal article" date="1992" name="Gene">
        <title>Genetic analysis of an aphid endosymbiont DNA fragment homologous to the rnpA-rpmH-dnaA-dnaN-gyrB region of eubacteria.</title>
        <authorList>
            <person name="Lai C.-Y."/>
            <person name="Baumann P."/>
        </authorList>
    </citation>
    <scope>NUCLEOTIDE SEQUENCE [GENOMIC DNA] OF 1-91</scope>
</reference>
<dbReference type="EC" id="5.6.2.2" evidence="1"/>
<dbReference type="EMBL" id="AF008210">
    <property type="protein sequence ID" value="AAC38108.1"/>
    <property type="molecule type" value="Genomic_DNA"/>
</dbReference>
<dbReference type="EMBL" id="AE013218">
    <property type="protein sequence ID" value="AAM67582.1"/>
    <property type="molecule type" value="Genomic_DNA"/>
</dbReference>
<dbReference type="EMBL" id="M80817">
    <property type="protein sequence ID" value="AAA73151.1"/>
    <property type="molecule type" value="Genomic_DNA"/>
</dbReference>
<dbReference type="RefSeq" id="WP_011053548.1">
    <property type="nucleotide sequence ID" value="NC_004061.1"/>
</dbReference>
<dbReference type="SMR" id="P29435"/>
<dbReference type="STRING" id="198804.BUsg_010"/>
<dbReference type="GeneID" id="93003472"/>
<dbReference type="KEGG" id="bas:BUsg_010"/>
<dbReference type="eggNOG" id="COG0187">
    <property type="taxonomic scope" value="Bacteria"/>
</dbReference>
<dbReference type="HOGENOM" id="CLU_006146_4_1_6"/>
<dbReference type="Proteomes" id="UP000000416">
    <property type="component" value="Chromosome"/>
</dbReference>
<dbReference type="GO" id="GO:0005694">
    <property type="term" value="C:chromosome"/>
    <property type="evidence" value="ECO:0007669"/>
    <property type="project" value="InterPro"/>
</dbReference>
<dbReference type="GO" id="GO:0005737">
    <property type="term" value="C:cytoplasm"/>
    <property type="evidence" value="ECO:0007669"/>
    <property type="project" value="UniProtKB-SubCell"/>
</dbReference>
<dbReference type="GO" id="GO:0005524">
    <property type="term" value="F:ATP binding"/>
    <property type="evidence" value="ECO:0007669"/>
    <property type="project" value="UniProtKB-UniRule"/>
</dbReference>
<dbReference type="GO" id="GO:0003677">
    <property type="term" value="F:DNA binding"/>
    <property type="evidence" value="ECO:0007669"/>
    <property type="project" value="UniProtKB-KW"/>
</dbReference>
<dbReference type="GO" id="GO:0003918">
    <property type="term" value="F:DNA topoisomerase type II (double strand cut, ATP-hydrolyzing) activity"/>
    <property type="evidence" value="ECO:0007669"/>
    <property type="project" value="UniProtKB-UniRule"/>
</dbReference>
<dbReference type="GO" id="GO:0046872">
    <property type="term" value="F:metal ion binding"/>
    <property type="evidence" value="ECO:0007669"/>
    <property type="project" value="UniProtKB-KW"/>
</dbReference>
<dbReference type="GO" id="GO:0006265">
    <property type="term" value="P:DNA topological change"/>
    <property type="evidence" value="ECO:0007669"/>
    <property type="project" value="UniProtKB-UniRule"/>
</dbReference>
<dbReference type="GO" id="GO:0006261">
    <property type="term" value="P:DNA-templated DNA replication"/>
    <property type="evidence" value="ECO:0007669"/>
    <property type="project" value="UniProtKB-UniRule"/>
</dbReference>
<dbReference type="CDD" id="cd16928">
    <property type="entry name" value="HATPase_GyrB-like"/>
    <property type="match status" value="1"/>
</dbReference>
<dbReference type="CDD" id="cd00822">
    <property type="entry name" value="TopoII_Trans_DNA_gyrase"/>
    <property type="match status" value="1"/>
</dbReference>
<dbReference type="FunFam" id="3.30.230.10:FF:000005">
    <property type="entry name" value="DNA gyrase subunit B"/>
    <property type="match status" value="1"/>
</dbReference>
<dbReference type="FunFam" id="3.30.565.10:FF:000002">
    <property type="entry name" value="DNA gyrase subunit B"/>
    <property type="match status" value="1"/>
</dbReference>
<dbReference type="FunFam" id="3.40.50.670:FF:000004">
    <property type="entry name" value="DNA gyrase subunit B"/>
    <property type="match status" value="1"/>
</dbReference>
<dbReference type="FunFam" id="3.40.50.670:FF:000001">
    <property type="entry name" value="DNA topoisomerase 2"/>
    <property type="match status" value="1"/>
</dbReference>
<dbReference type="Gene3D" id="3.10.20.690">
    <property type="match status" value="1"/>
</dbReference>
<dbReference type="Gene3D" id="3.30.230.10">
    <property type="match status" value="1"/>
</dbReference>
<dbReference type="Gene3D" id="3.40.50.670">
    <property type="match status" value="2"/>
</dbReference>
<dbReference type="Gene3D" id="3.30.565.10">
    <property type="entry name" value="Histidine kinase-like ATPase, C-terminal domain"/>
    <property type="match status" value="1"/>
</dbReference>
<dbReference type="HAMAP" id="MF_01898">
    <property type="entry name" value="GyrB"/>
    <property type="match status" value="1"/>
</dbReference>
<dbReference type="InterPro" id="IPR002288">
    <property type="entry name" value="DNA_gyrase_B_C"/>
</dbReference>
<dbReference type="InterPro" id="IPR011557">
    <property type="entry name" value="GyrB"/>
</dbReference>
<dbReference type="InterPro" id="IPR049353">
    <property type="entry name" value="GyrB_hook"/>
</dbReference>
<dbReference type="InterPro" id="IPR041423">
    <property type="entry name" value="GyrB_insert"/>
</dbReference>
<dbReference type="InterPro" id="IPR036890">
    <property type="entry name" value="HATPase_C_sf"/>
</dbReference>
<dbReference type="InterPro" id="IPR020568">
    <property type="entry name" value="Ribosomal_Su5_D2-typ_SF"/>
</dbReference>
<dbReference type="InterPro" id="IPR014721">
    <property type="entry name" value="Ribsml_uS5_D2-typ_fold_subgr"/>
</dbReference>
<dbReference type="InterPro" id="IPR001241">
    <property type="entry name" value="Topo_IIA"/>
</dbReference>
<dbReference type="InterPro" id="IPR013760">
    <property type="entry name" value="Topo_IIA-like_dom_sf"/>
</dbReference>
<dbReference type="InterPro" id="IPR000565">
    <property type="entry name" value="Topo_IIA_B"/>
</dbReference>
<dbReference type="InterPro" id="IPR013759">
    <property type="entry name" value="Topo_IIA_B_C"/>
</dbReference>
<dbReference type="InterPro" id="IPR013506">
    <property type="entry name" value="Topo_IIA_bsu_dom2"/>
</dbReference>
<dbReference type="InterPro" id="IPR018522">
    <property type="entry name" value="TopoIIA_CS"/>
</dbReference>
<dbReference type="InterPro" id="IPR006171">
    <property type="entry name" value="TOPRIM_dom"/>
</dbReference>
<dbReference type="NCBIfam" id="TIGR01059">
    <property type="entry name" value="gyrB"/>
    <property type="match status" value="1"/>
</dbReference>
<dbReference type="NCBIfam" id="NF004189">
    <property type="entry name" value="PRK05644.1"/>
    <property type="match status" value="1"/>
</dbReference>
<dbReference type="NCBIfam" id="NF011501">
    <property type="entry name" value="PRK14939.1"/>
    <property type="match status" value="1"/>
</dbReference>
<dbReference type="PANTHER" id="PTHR45866:SF1">
    <property type="entry name" value="DNA GYRASE SUBUNIT B, MITOCHONDRIAL"/>
    <property type="match status" value="1"/>
</dbReference>
<dbReference type="PANTHER" id="PTHR45866">
    <property type="entry name" value="DNA GYRASE/TOPOISOMERASE SUBUNIT B"/>
    <property type="match status" value="1"/>
</dbReference>
<dbReference type="Pfam" id="PF00204">
    <property type="entry name" value="DNA_gyraseB"/>
    <property type="match status" value="1"/>
</dbReference>
<dbReference type="Pfam" id="PF00986">
    <property type="entry name" value="DNA_gyraseB_C"/>
    <property type="match status" value="1"/>
</dbReference>
<dbReference type="Pfam" id="PF21249">
    <property type="entry name" value="GyrB_hook"/>
    <property type="match status" value="1"/>
</dbReference>
<dbReference type="Pfam" id="PF18053">
    <property type="entry name" value="GyrB_insert"/>
    <property type="match status" value="1"/>
</dbReference>
<dbReference type="Pfam" id="PF02518">
    <property type="entry name" value="HATPase_c"/>
    <property type="match status" value="1"/>
</dbReference>
<dbReference type="Pfam" id="PF01751">
    <property type="entry name" value="Toprim"/>
    <property type="match status" value="1"/>
</dbReference>
<dbReference type="PRINTS" id="PR01159">
    <property type="entry name" value="DNAGYRASEB"/>
</dbReference>
<dbReference type="PRINTS" id="PR00418">
    <property type="entry name" value="TPI2FAMILY"/>
</dbReference>
<dbReference type="SMART" id="SM00387">
    <property type="entry name" value="HATPase_c"/>
    <property type="match status" value="1"/>
</dbReference>
<dbReference type="SMART" id="SM00433">
    <property type="entry name" value="TOP2c"/>
    <property type="match status" value="1"/>
</dbReference>
<dbReference type="SUPFAM" id="SSF55874">
    <property type="entry name" value="ATPase domain of HSP90 chaperone/DNA topoisomerase II/histidine kinase"/>
    <property type="match status" value="1"/>
</dbReference>
<dbReference type="SUPFAM" id="SSF54211">
    <property type="entry name" value="Ribosomal protein S5 domain 2-like"/>
    <property type="match status" value="1"/>
</dbReference>
<dbReference type="SUPFAM" id="SSF56719">
    <property type="entry name" value="Type II DNA topoisomerase"/>
    <property type="match status" value="1"/>
</dbReference>
<dbReference type="PROSITE" id="PS00177">
    <property type="entry name" value="TOPOISOMERASE_II"/>
    <property type="match status" value="1"/>
</dbReference>
<dbReference type="PROSITE" id="PS50880">
    <property type="entry name" value="TOPRIM"/>
    <property type="match status" value="1"/>
</dbReference>
<protein>
    <recommendedName>
        <fullName evidence="1">DNA gyrase subunit B</fullName>
        <ecNumber evidence="1">5.6.2.2</ecNumber>
    </recommendedName>
</protein>
<name>GYRB_BUCAP</name>
<organism>
    <name type="scientific">Buchnera aphidicola subsp. Schizaphis graminum (strain Sg)</name>
    <dbReference type="NCBI Taxonomy" id="198804"/>
    <lineage>
        <taxon>Bacteria</taxon>
        <taxon>Pseudomonadati</taxon>
        <taxon>Pseudomonadota</taxon>
        <taxon>Gammaproteobacteria</taxon>
        <taxon>Enterobacterales</taxon>
        <taxon>Erwiniaceae</taxon>
        <taxon>Buchnera</taxon>
    </lineage>
</organism>
<comment type="function">
    <text evidence="1">A type II topoisomerase that negatively supercoils closed circular double-stranded (ds) DNA in an ATP-dependent manner to modulate DNA topology and maintain chromosomes in an underwound state. Negative supercoiling favors strand separation, and DNA replication, transcription, recombination and repair, all of which involve strand separation. Also able to catalyze the interconversion of other topological isomers of dsDNA rings, including catenanes and knotted rings. Type II topoisomerases break and join 2 DNA strands simultaneously in an ATP-dependent manner.</text>
</comment>
<comment type="catalytic activity">
    <reaction evidence="1">
        <text>ATP-dependent breakage, passage and rejoining of double-stranded DNA.</text>
        <dbReference type="EC" id="5.6.2.2"/>
    </reaction>
</comment>
<comment type="cofactor">
    <cofactor evidence="1">
        <name>Mg(2+)</name>
        <dbReference type="ChEBI" id="CHEBI:18420"/>
    </cofactor>
    <cofactor evidence="1">
        <name>Mn(2+)</name>
        <dbReference type="ChEBI" id="CHEBI:29035"/>
    </cofactor>
    <cofactor evidence="1">
        <name>Ca(2+)</name>
        <dbReference type="ChEBI" id="CHEBI:29108"/>
    </cofactor>
    <text evidence="1">Binds two Mg(2+) per subunit. The magnesium ions form salt bridges with both the protein and the DNA. Can also accept other divalent metal cations, such as Mn(2+) or Ca(2+).</text>
</comment>
<comment type="subunit">
    <text evidence="1">Heterotetramer, composed of two GyrA and two GyrB chains. In the heterotetramer, GyrA contains the active site tyrosine that forms a transient covalent intermediate with DNA, while GyrB binds cofactors and catalyzes ATP hydrolysis.</text>
</comment>
<comment type="subcellular location">
    <subcellularLocation>
        <location evidence="1">Cytoplasm</location>
    </subcellularLocation>
</comment>
<comment type="miscellaneous">
    <text evidence="1">Few gyrases are as efficient as E.coli at forming negative supercoils. Not all organisms have 2 type II topoisomerases; in organisms with a single type II topoisomerase this enzyme also has to decatenate newly replicated chromosomes.</text>
</comment>
<comment type="similarity">
    <text evidence="1">Belongs to the type II topoisomerase GyrB family.</text>
</comment>
<keyword id="KW-0067">ATP-binding</keyword>
<keyword id="KW-0963">Cytoplasm</keyword>
<keyword id="KW-0238">DNA-binding</keyword>
<keyword id="KW-0413">Isomerase</keyword>
<keyword id="KW-0460">Magnesium</keyword>
<keyword id="KW-0479">Metal-binding</keyword>
<keyword id="KW-0547">Nucleotide-binding</keyword>
<keyword id="KW-0799">Topoisomerase</keyword>
<evidence type="ECO:0000255" key="1">
    <source>
        <dbReference type="HAMAP-Rule" id="MF_01898"/>
    </source>
</evidence>
<evidence type="ECO:0000305" key="2"/>